<dbReference type="EMBL" id="HM543175">
    <property type="protein sequence ID" value="AEJ88240.1"/>
    <property type="molecule type" value="Genomic_DNA"/>
</dbReference>
<dbReference type="SMR" id="L7NCR7"/>
<dbReference type="GlyCosmos" id="L7NCR7">
    <property type="glycosylation" value="1 site, No reported glycans"/>
</dbReference>
<dbReference type="VEuPathDB" id="FungiDB:DVH05_022932"/>
<dbReference type="GO" id="GO:0005576">
    <property type="term" value="C:extracellular region"/>
    <property type="evidence" value="ECO:0007669"/>
    <property type="project" value="UniProtKB-SubCell"/>
</dbReference>
<dbReference type="InterPro" id="IPR008701">
    <property type="entry name" value="NPP1"/>
</dbReference>
<dbReference type="PANTHER" id="PTHR33657">
    <property type="entry name" value="DOMAIN PROTEIN, PUTATIVE (AFU_ORTHOLOGUE AFUA_5G00600)-RELATED"/>
    <property type="match status" value="1"/>
</dbReference>
<dbReference type="PANTHER" id="PTHR33657:SF8">
    <property type="entry name" value="DOMAIN PROTEIN, PUTATIVE (AFU_ORTHOLOGUE AFUA_5G00600)-RELATED"/>
    <property type="match status" value="1"/>
</dbReference>
<dbReference type="Pfam" id="PF05630">
    <property type="entry name" value="NPP1"/>
    <property type="match status" value="1"/>
</dbReference>
<gene>
    <name evidence="7" type="primary">NLP9</name>
    <name evidence="6" type="synonym">NPP9</name>
</gene>
<keyword id="KW-0325">Glycoprotein</keyword>
<keyword id="KW-0964">Secreted</keyword>
<keyword id="KW-0732">Signal</keyword>
<keyword id="KW-0843">Virulence</keyword>
<evidence type="ECO:0000250" key="1">
    <source>
        <dbReference type="UniProtKB" id="L7NCR0"/>
    </source>
</evidence>
<evidence type="ECO:0000255" key="2"/>
<evidence type="ECO:0000255" key="3">
    <source>
        <dbReference type="PROSITE-ProRule" id="PRU00498"/>
    </source>
</evidence>
<evidence type="ECO:0000256" key="4">
    <source>
        <dbReference type="SAM" id="MobiDB-lite"/>
    </source>
</evidence>
<evidence type="ECO:0000269" key="5">
    <source>
    </source>
</evidence>
<evidence type="ECO:0000303" key="6">
    <source>
    </source>
</evidence>
<evidence type="ECO:0000303" key="7">
    <source>
    </source>
</evidence>
<evidence type="ECO:0000305" key="8"/>
<evidence type="ECO:0000305" key="9">
    <source>
    </source>
</evidence>
<evidence type="ECO:0000305" key="10">
    <source>
    </source>
</evidence>
<feature type="signal peptide" evidence="2">
    <location>
        <begin position="1"/>
        <end position="19"/>
    </location>
</feature>
<feature type="chain" id="PRO_5003982506" description="NLP effector protein 9">
    <location>
        <begin position="20"/>
        <end position="318"/>
    </location>
</feature>
<feature type="region of interest" description="Disordered" evidence="4">
    <location>
        <begin position="24"/>
        <end position="43"/>
    </location>
</feature>
<feature type="region of interest" description="Disordered" evidence="4">
    <location>
        <begin position="50"/>
        <end position="93"/>
    </location>
</feature>
<feature type="short sequence motif" description="Conserved undecapeptide motif I" evidence="1">
    <location>
        <begin position="185"/>
        <end position="195"/>
    </location>
</feature>
<feature type="short sequence motif" description="Hepta-peptide GHRHDWE motif II" evidence="10">
    <location>
        <begin position="202"/>
        <end position="208"/>
    </location>
</feature>
<feature type="compositionally biased region" description="Low complexity" evidence="4">
    <location>
        <begin position="24"/>
        <end position="35"/>
    </location>
</feature>
<feature type="compositionally biased region" description="Polar residues" evidence="4">
    <location>
        <begin position="55"/>
        <end position="65"/>
    </location>
</feature>
<feature type="compositionally biased region" description="Pro residues" evidence="4">
    <location>
        <begin position="73"/>
        <end position="93"/>
    </location>
</feature>
<feature type="glycosylation site" description="N-linked (GlcNAc...) asparagine" evidence="3">
    <location>
        <position position="60"/>
    </location>
</feature>
<accession>L7NCR7</accession>
<proteinExistence type="evidence at transcript level"/>
<comment type="function">
    <text evidence="5">Secreted effector that contributes to virulence during infection by P.capsici. Induces distinct chlorosis at 3 days after inoculation of host C.annuum leaves, and all the chlorotic areas gradually turn brown and become moderately necrotic at 7 days after inoculation. Caused only small necrotic areas at 7 days after non-host N.benthamiana leaves infection.</text>
</comment>
<comment type="subcellular location">
    <subcellularLocation>
        <location evidence="9">Secreted</location>
    </subcellularLocation>
</comment>
<comment type="induction">
    <text evidence="5">Expression reached the highest levels at 3 days after inoculation of pepper leaves, followed by a gradual decline.</text>
</comment>
<comment type="domain">
    <text evidence="1">Key residues/motif important for the effector activities are degenerated in most NLPs, including the nlp24 peptide consisting of the conserved region I (11-aa immunogenic part) and conserved region II (the heptapeptide GHRHDWE motif) that is important for phytotoxic activity.</text>
</comment>
<comment type="similarity">
    <text evidence="8">Belongs to the Necrosis inducing protein (NPP1) family.</text>
</comment>
<sequence>MRLFAFLWSSVAFLSTVQAQVSQTASQTQDDSSTPTPTPPDKYVNIADALRTKTPMATPNRTIMPTRQDPRAPEPPTPEPTYLPTLSPTPAPTPDPGPWVAKWMDHDQVQPFKQPDPVTVSEKAAVKFKPQIHITNGCHPYPAVTWWGETSGGLKTKGAPSAGCKGSGWGSQVYGRSTWVKGVWAIMYSWYFPKDSPSTGLGHRHDWEHVIVWIDNPDIENPKILAVTPSAHSGYSKQVPPSADCVDGTSVKVKYESKWPINHALESTTEGGETQDLIMWNQLSENALRAMNSVTWGDANCPFCDGNFQAKLDKAWPF</sequence>
<organism>
    <name type="scientific">Phytophthora capsici</name>
    <dbReference type="NCBI Taxonomy" id="4784"/>
    <lineage>
        <taxon>Eukaryota</taxon>
        <taxon>Sar</taxon>
        <taxon>Stramenopiles</taxon>
        <taxon>Oomycota</taxon>
        <taxon>Peronosporales</taxon>
        <taxon>Peronosporaceae</taxon>
        <taxon>Phytophthora</taxon>
    </lineage>
</organism>
<name>NLP9_PHYCP</name>
<protein>
    <recommendedName>
        <fullName evidence="7">NLP effector protein 9</fullName>
    </recommendedName>
    <alternativeName>
        <fullName evidence="6">Necrosis-inducing protein 9</fullName>
    </alternativeName>
    <alternativeName>
        <fullName evidence="6">Nep1-like protein 9</fullName>
    </alternativeName>
</protein>
<reference key="1">
    <citation type="journal article" date="2011" name="Genet. Mol. Res.">
        <title>Identification of 18 genes encoding necrosis-inducing proteins from the plant pathogen Phytophthora capsici (Pythiaceae: Oomycetes).</title>
        <authorList>
            <person name="Feng B.Z."/>
            <person name="Li P.Q."/>
            <person name="Fu L."/>
            <person name="Sun B.B."/>
            <person name="Zhang X.G."/>
        </authorList>
    </citation>
    <scope>NUCLEOTIDE SEQUENCE [GENOMIC DNA]</scope>
    <scope>DOMAIN</scope>
</reference>
<reference key="2">
    <citation type="journal article" date="2014" name="BMC Plant Biol.">
        <title>Characterization of necrosis-inducing NLP proteins in Phytophthora capsici.</title>
        <authorList>
            <person name="Feng B.Z."/>
            <person name="Zhu X.P."/>
            <person name="Fu L."/>
            <person name="Lv R.F."/>
            <person name="Storey D."/>
            <person name="Tooley P."/>
            <person name="Zhang X.G."/>
        </authorList>
    </citation>
    <scope>INDUCTION</scope>
    <scope>FUNCTION</scope>
</reference>